<proteinExistence type="evidence at protein level"/>
<organism>
    <name type="scientific">Lactococcus lactis subsp. lactis (strain IL1403)</name>
    <name type="common">Streptococcus lactis</name>
    <dbReference type="NCBI Taxonomy" id="272623"/>
    <lineage>
        <taxon>Bacteria</taxon>
        <taxon>Bacillati</taxon>
        <taxon>Bacillota</taxon>
        <taxon>Bacilli</taxon>
        <taxon>Lactobacillales</taxon>
        <taxon>Streptococcaceae</taxon>
        <taxon>Lactococcus</taxon>
    </lineage>
</organism>
<comment type="function">
    <text evidence="6">Component of the dihydroxyacetone kinase complex, which is responsible for the phosphoenolpyruvate (PEP)-dependent phosphorylation of dihydroxyacetone. DhaM serves as the phosphoryl donor. Is phosphorylated by phosphoenolpyruvate in an EI- and HPr-dependent reaction, and a phosphorelay system on histidine residues finally leads to phosphoryl transfer to DhaL and dihydroxyacetone.</text>
</comment>
<comment type="catalytic activity">
    <reaction evidence="1">
        <text>dihydroxyacetone + phosphoenolpyruvate = dihydroxyacetone phosphate + pyruvate</text>
        <dbReference type="Rhea" id="RHEA:18381"/>
        <dbReference type="ChEBI" id="CHEBI:15361"/>
        <dbReference type="ChEBI" id="CHEBI:16016"/>
        <dbReference type="ChEBI" id="CHEBI:57642"/>
        <dbReference type="ChEBI" id="CHEBI:58702"/>
        <dbReference type="EC" id="2.7.1.121"/>
    </reaction>
</comment>
<comment type="pathway">
    <text evidence="5">Polyol metabolism; glycerol degradation.</text>
</comment>
<comment type="subunit">
    <text evidence="3">Homodimer. The dihydroxyacetone kinase complex is composed of a homodimer of DhaM, a homodimer of DhaK and the subunit DhaL.</text>
</comment>
<comment type="induction">
    <text evidence="6">Induced by dihydroxyacetone via the DhaQ-DhaS complex.</text>
</comment>
<comment type="domain">
    <text evidence="2">The EIIA type-4 domain is phosphorylated by phospho-HPr on a histidyl residue. Then, it transfers the phosphoryl group to the EIIB type-4 domain.</text>
</comment>
<comment type="miscellaneous">
    <text evidence="6">Unlike the carbohydrate-specific transporters of the PTS, the complex DhaKML has no transport activity.</text>
</comment>
<sequence length="123" mass="13394">MTYGIVIVSHSPEIASGLKKLIREVAKNISLTAIGGLENGEIGTSFDRVMNAIEENEADNLLTFFDLGSARMNLDLVSEMTDKELTIFNVPLIEGAYTASALLEAGATFEAIKEQLEKMLIEK</sequence>
<gene>
    <name evidence="4" type="primary">dhaM</name>
    <name type="ordered locus">LL0250</name>
    <name type="ORF">L47257</name>
</gene>
<accession>Q9CIV6</accession>
<name>DHAM_LACLA</name>
<reference key="1">
    <citation type="journal article" date="2001" name="Genome Res.">
        <title>The complete genome sequence of the lactic acid bacterium Lactococcus lactis ssp. lactis IL1403.</title>
        <authorList>
            <person name="Bolotin A."/>
            <person name="Wincker P."/>
            <person name="Mauger S."/>
            <person name="Jaillon O."/>
            <person name="Malarme K."/>
            <person name="Weissenbach J."/>
            <person name="Ehrlich S.D."/>
            <person name="Sorokin A."/>
        </authorList>
    </citation>
    <scope>NUCLEOTIDE SEQUENCE [LARGE SCALE GENOMIC DNA]</scope>
    <source>
        <strain>IL1403</strain>
    </source>
</reference>
<reference key="2">
    <citation type="journal article" date="2008" name="J. Biol. Chem.">
        <title>X-ray structures of the three Lactococcus lactis dihydroxyacetone kinase subunits and of a transient intersubunit complex.</title>
        <authorList>
            <person name="Zurbriggen A."/>
            <person name="Jeckelmann J.M."/>
            <person name="Christen S."/>
            <person name="Bieniossek C."/>
            <person name="Baumann U."/>
            <person name="Erni B."/>
        </authorList>
    </citation>
    <scope>X-RAY CRYSTALLOGRAPHY (1.10 ANGSTROMS)</scope>
    <scope>FUNCTION</scope>
    <scope>ACTIVE SITE</scope>
    <scope>INDUCTION</scope>
    <scope>SUBUNIT</scope>
</reference>
<protein>
    <recommendedName>
        <fullName evidence="4">PTS-dependent dihydroxyacetone kinase, phosphotransferase subunit DhaM</fullName>
        <ecNumber evidence="1">2.7.1.121</ecNumber>
    </recommendedName>
    <alternativeName>
        <fullName evidence="4">PTS system EIIA component</fullName>
    </alternativeName>
    <alternativeName>
        <fullName evidence="4">Phosphotransferase enzyme IIA component</fullName>
    </alternativeName>
</protein>
<dbReference type="EC" id="2.7.1.121" evidence="1"/>
<dbReference type="EMBL" id="AE005176">
    <property type="protein sequence ID" value="AAK04348.1"/>
    <property type="molecule type" value="Genomic_DNA"/>
</dbReference>
<dbReference type="PIR" id="B86656">
    <property type="entry name" value="B86656"/>
</dbReference>
<dbReference type="RefSeq" id="NP_266406.1">
    <property type="nucleotide sequence ID" value="NC_002662.1"/>
</dbReference>
<dbReference type="RefSeq" id="WP_010905237.1">
    <property type="nucleotide sequence ID" value="NC_002662.1"/>
</dbReference>
<dbReference type="PDB" id="3CR3">
    <property type="method" value="X-ray"/>
    <property type="resolution" value="2.10 A"/>
    <property type="chains" value="C/D=3-123"/>
</dbReference>
<dbReference type="PDB" id="3CT6">
    <property type="method" value="X-ray"/>
    <property type="resolution" value="1.10 A"/>
    <property type="chains" value="A/B=1-123"/>
</dbReference>
<dbReference type="PDBsum" id="3CR3"/>
<dbReference type="PDBsum" id="3CT6"/>
<dbReference type="SMR" id="Q9CIV6"/>
<dbReference type="PaxDb" id="272623-L47257"/>
<dbReference type="EnsemblBacteria" id="AAK04348">
    <property type="protein sequence ID" value="AAK04348"/>
    <property type="gene ID" value="L47257"/>
</dbReference>
<dbReference type="KEGG" id="lla:L47257"/>
<dbReference type="PATRIC" id="fig|272623.7.peg.275"/>
<dbReference type="eggNOG" id="COG3412">
    <property type="taxonomic scope" value="Bacteria"/>
</dbReference>
<dbReference type="HOGENOM" id="CLU_045361_1_0_9"/>
<dbReference type="OrthoDB" id="7065393at2"/>
<dbReference type="UniPathway" id="UPA00616"/>
<dbReference type="EvolutionaryTrace" id="Q9CIV6"/>
<dbReference type="Proteomes" id="UP000002196">
    <property type="component" value="Chromosome"/>
</dbReference>
<dbReference type="GO" id="GO:0016020">
    <property type="term" value="C:membrane"/>
    <property type="evidence" value="ECO:0007669"/>
    <property type="project" value="InterPro"/>
</dbReference>
<dbReference type="GO" id="GO:0005524">
    <property type="term" value="F:ATP binding"/>
    <property type="evidence" value="ECO:0007669"/>
    <property type="project" value="UniProtKB-KW"/>
</dbReference>
<dbReference type="GO" id="GO:0047324">
    <property type="term" value="F:phosphoenolpyruvate-glycerone phosphotransferase activity"/>
    <property type="evidence" value="ECO:0000250"/>
    <property type="project" value="UniProtKB"/>
</dbReference>
<dbReference type="GO" id="GO:0019563">
    <property type="term" value="P:glycerol catabolic process"/>
    <property type="evidence" value="ECO:0007669"/>
    <property type="project" value="UniProtKB-UniPathway"/>
</dbReference>
<dbReference type="GO" id="GO:0009401">
    <property type="term" value="P:phosphoenolpyruvate-dependent sugar phosphotransferase system"/>
    <property type="evidence" value="ECO:0007669"/>
    <property type="project" value="UniProtKB-KW"/>
</dbReference>
<dbReference type="Gene3D" id="3.40.50.510">
    <property type="entry name" value="Phosphotransferase system, mannose-type IIA component"/>
    <property type="match status" value="1"/>
</dbReference>
<dbReference type="InterPro" id="IPR039643">
    <property type="entry name" value="DhaM"/>
</dbReference>
<dbReference type="InterPro" id="IPR012844">
    <property type="entry name" value="DhaM_N"/>
</dbReference>
<dbReference type="InterPro" id="IPR004701">
    <property type="entry name" value="PTS_EIIA_man-typ"/>
</dbReference>
<dbReference type="InterPro" id="IPR036662">
    <property type="entry name" value="PTS_EIIA_man-typ_sf"/>
</dbReference>
<dbReference type="NCBIfam" id="TIGR02364">
    <property type="entry name" value="dha_pts"/>
    <property type="match status" value="1"/>
</dbReference>
<dbReference type="PANTHER" id="PTHR38594">
    <property type="entry name" value="PEP-DEPENDENT DIHYDROXYACETONE KINASE, PHOSPHORYL DONOR SUBUNIT DHAM"/>
    <property type="match status" value="1"/>
</dbReference>
<dbReference type="PANTHER" id="PTHR38594:SF1">
    <property type="entry name" value="PEP-DEPENDENT DIHYDROXYACETONE KINASE, PHOSPHORYL DONOR SUBUNIT DHAM"/>
    <property type="match status" value="1"/>
</dbReference>
<dbReference type="Pfam" id="PF03610">
    <property type="entry name" value="EIIA-man"/>
    <property type="match status" value="1"/>
</dbReference>
<dbReference type="SUPFAM" id="SSF53062">
    <property type="entry name" value="PTS system fructose IIA component-like"/>
    <property type="match status" value="1"/>
</dbReference>
<dbReference type="PROSITE" id="PS51096">
    <property type="entry name" value="PTS_EIIA_TYPE_4"/>
    <property type="match status" value="1"/>
</dbReference>
<feature type="chain" id="PRO_0000270537" description="PTS-dependent dihydroxyacetone kinase, phosphotransferase subunit DhaM">
    <location>
        <begin position="1"/>
        <end position="123"/>
    </location>
</feature>
<feature type="domain" description="PTS EIIA type-4" evidence="2 6">
    <location>
        <begin position="2"/>
        <end position="123"/>
    </location>
</feature>
<feature type="active site" description="Tele-phosphohistidine intermediate; for EIIA activity" evidence="2">
    <location>
        <position position="10"/>
    </location>
</feature>
<feature type="strand" evidence="7">
    <location>
        <begin position="3"/>
        <end position="10"/>
    </location>
</feature>
<feature type="helix" evidence="7">
    <location>
        <begin position="12"/>
        <end position="23"/>
    </location>
</feature>
<feature type="strand" evidence="7">
    <location>
        <begin position="27"/>
        <end position="29"/>
    </location>
</feature>
<feature type="strand" evidence="7">
    <location>
        <begin position="31"/>
        <end position="36"/>
    </location>
</feature>
<feature type="helix" evidence="7">
    <location>
        <begin position="46"/>
        <end position="55"/>
    </location>
</feature>
<feature type="strand" evidence="7">
    <location>
        <begin position="59"/>
        <end position="67"/>
    </location>
</feature>
<feature type="helix" evidence="7">
    <location>
        <begin position="68"/>
        <end position="70"/>
    </location>
</feature>
<feature type="helix" evidence="7">
    <location>
        <begin position="71"/>
        <end position="79"/>
    </location>
</feature>
<feature type="strand" evidence="7">
    <location>
        <begin position="82"/>
        <end position="87"/>
    </location>
</feature>
<feature type="helix" evidence="7">
    <location>
        <begin position="92"/>
        <end position="104"/>
    </location>
</feature>
<feature type="helix" evidence="7">
    <location>
        <begin position="109"/>
        <end position="116"/>
    </location>
</feature>
<feature type="helix" evidence="7">
    <location>
        <begin position="117"/>
        <end position="119"/>
    </location>
</feature>
<evidence type="ECO:0000250" key="1">
    <source>
        <dbReference type="UniProtKB" id="Q92ET9"/>
    </source>
</evidence>
<evidence type="ECO:0000255" key="2">
    <source>
        <dbReference type="PROSITE-ProRule" id="PRU00419"/>
    </source>
</evidence>
<evidence type="ECO:0000269" key="3">
    <source>
    </source>
</evidence>
<evidence type="ECO:0000303" key="4">
    <source>
    </source>
</evidence>
<evidence type="ECO:0000305" key="5"/>
<evidence type="ECO:0000305" key="6">
    <source>
    </source>
</evidence>
<evidence type="ECO:0007829" key="7">
    <source>
        <dbReference type="PDB" id="3CT6"/>
    </source>
</evidence>
<keyword id="KW-0002">3D-structure</keyword>
<keyword id="KW-0067">ATP-binding</keyword>
<keyword id="KW-0319">Glycerol metabolism</keyword>
<keyword id="KW-0418">Kinase</keyword>
<keyword id="KW-0547">Nucleotide-binding</keyword>
<keyword id="KW-0598">Phosphotransferase system</keyword>
<keyword id="KW-1185">Reference proteome</keyword>
<keyword id="KW-0808">Transferase</keyword>